<accession>Q8TXX3</accession>
<accession>Q9P9A2</accession>
<organism>
    <name type="scientific">Methanopyrus kandleri (strain AV19 / DSM 6324 / JCM 9639 / NBRC 100938)</name>
    <dbReference type="NCBI Taxonomy" id="190192"/>
    <lineage>
        <taxon>Archaea</taxon>
        <taxon>Methanobacteriati</taxon>
        <taxon>Methanobacteriota</taxon>
        <taxon>Methanomada group</taxon>
        <taxon>Methanopyri</taxon>
        <taxon>Methanopyrales</taxon>
        <taxon>Methanopyraceae</taxon>
        <taxon>Methanopyrus</taxon>
    </lineage>
</organism>
<name>COOS_METKA</name>
<protein>
    <recommendedName>
        <fullName>Carbon monoxide dehydrogenase</fullName>
        <shortName>CODH</shortName>
        <ecNumber evidence="1">1.2.7.4</ecNumber>
    </recommendedName>
</protein>
<reference key="1">
    <citation type="journal article" date="1999" name="J. Microbiol. Biotechnol.">
        <title>Random sequence analysis of the genomic DNA of Methanopyrus kandleri and molecular cloning of the gene encoding a homolog of the catalytic subunit of carbon monoxide dehydrogenase.</title>
        <authorList>
            <person name="Shin H.-S."/>
            <person name="Ryu J.-R."/>
            <person name="Han Y.-S."/>
            <person name="Choi Y.-J."/>
            <person name="Yu Y.G."/>
        </authorList>
    </citation>
    <scope>NUCLEOTIDE SEQUENCE [GENOMIC DNA]</scope>
</reference>
<reference key="2">
    <citation type="journal article" date="2002" name="Proc. Natl. Acad. Sci. U.S.A.">
        <title>The complete genome of hyperthermophile Methanopyrus kandleri AV19 and monophyly of archaeal methanogens.</title>
        <authorList>
            <person name="Slesarev A.I."/>
            <person name="Mezhevaya K.V."/>
            <person name="Makarova K.S."/>
            <person name="Polushin N.N."/>
            <person name="Shcherbinina O.V."/>
            <person name="Shakhova V.V."/>
            <person name="Belova G.I."/>
            <person name="Aravind L."/>
            <person name="Natale D.A."/>
            <person name="Rogozin I.B."/>
            <person name="Tatusov R.L."/>
            <person name="Wolf Y.I."/>
            <person name="Stetter K.O."/>
            <person name="Malykh A.G."/>
            <person name="Koonin E.V."/>
            <person name="Kozyavkin S.A."/>
        </authorList>
    </citation>
    <scope>NUCLEOTIDE SEQUENCE [LARGE SCALE GENOMIC DNA]</scope>
    <source>
        <strain>AV19 / DSM 6324 / JCM 9639 / NBRC 100938</strain>
    </source>
</reference>
<proteinExistence type="inferred from homology"/>
<evidence type="ECO:0000250" key="1">
    <source>
        <dbReference type="UniProtKB" id="Q9F8A8"/>
    </source>
</evidence>
<evidence type="ECO:0000305" key="2"/>
<dbReference type="EC" id="1.2.7.4" evidence="1"/>
<dbReference type="EMBL" id="AF272857">
    <property type="protein sequence ID" value="AAF86272.1"/>
    <property type="status" value="ALT_FRAME"/>
    <property type="molecule type" value="Genomic_DNA"/>
</dbReference>
<dbReference type="EMBL" id="AE009439">
    <property type="protein sequence ID" value="AAM01751.1"/>
    <property type="molecule type" value="Genomic_DNA"/>
</dbReference>
<dbReference type="RefSeq" id="WP_011018906.1">
    <property type="nucleotide sequence ID" value="NC_003551.1"/>
</dbReference>
<dbReference type="SMR" id="Q8TXX3"/>
<dbReference type="FunCoup" id="Q8TXX3">
    <property type="interactions" value="63"/>
</dbReference>
<dbReference type="STRING" id="190192.MK0536"/>
<dbReference type="PaxDb" id="190192-MK0536"/>
<dbReference type="EnsemblBacteria" id="AAM01751">
    <property type="protein sequence ID" value="AAM01751"/>
    <property type="gene ID" value="MK0536"/>
</dbReference>
<dbReference type="GeneID" id="1476637"/>
<dbReference type="KEGG" id="mka:MK0536"/>
<dbReference type="PATRIC" id="fig|190192.8.peg.571"/>
<dbReference type="HOGENOM" id="CLU_030631_0_0_2"/>
<dbReference type="InParanoid" id="Q8TXX3"/>
<dbReference type="OrthoDB" id="146433at2157"/>
<dbReference type="Proteomes" id="UP000001826">
    <property type="component" value="Chromosome"/>
</dbReference>
<dbReference type="GO" id="GO:0051539">
    <property type="term" value="F:4 iron, 4 sulfur cluster binding"/>
    <property type="evidence" value="ECO:0007669"/>
    <property type="project" value="UniProtKB-KW"/>
</dbReference>
<dbReference type="GO" id="GO:0043885">
    <property type="term" value="F:anaerobic carbon-monoxide dehydrogenase activity"/>
    <property type="evidence" value="ECO:0007669"/>
    <property type="project" value="UniProtKB-EC"/>
</dbReference>
<dbReference type="GO" id="GO:0050418">
    <property type="term" value="F:hydroxylamine reductase activity"/>
    <property type="evidence" value="ECO:0007669"/>
    <property type="project" value="TreeGrafter"/>
</dbReference>
<dbReference type="GO" id="GO:0016151">
    <property type="term" value="F:nickel cation binding"/>
    <property type="evidence" value="ECO:0007669"/>
    <property type="project" value="InterPro"/>
</dbReference>
<dbReference type="GO" id="GO:0004601">
    <property type="term" value="F:peroxidase activity"/>
    <property type="evidence" value="ECO:0007669"/>
    <property type="project" value="TreeGrafter"/>
</dbReference>
<dbReference type="GO" id="GO:0006091">
    <property type="term" value="P:generation of precursor metabolites and energy"/>
    <property type="evidence" value="ECO:0007669"/>
    <property type="project" value="InterPro"/>
</dbReference>
<dbReference type="GO" id="GO:0042542">
    <property type="term" value="P:response to hydrogen peroxide"/>
    <property type="evidence" value="ECO:0007669"/>
    <property type="project" value="TreeGrafter"/>
</dbReference>
<dbReference type="CDD" id="cd01915">
    <property type="entry name" value="CODH"/>
    <property type="match status" value="1"/>
</dbReference>
<dbReference type="Gene3D" id="1.20.1270.30">
    <property type="match status" value="1"/>
</dbReference>
<dbReference type="Gene3D" id="3.40.50.2030">
    <property type="match status" value="2"/>
</dbReference>
<dbReference type="InterPro" id="IPR016101">
    <property type="entry name" value="CO_DH_a-bundle"/>
</dbReference>
<dbReference type="InterPro" id="IPR010047">
    <property type="entry name" value="CODH"/>
</dbReference>
<dbReference type="InterPro" id="IPR004137">
    <property type="entry name" value="HCP/CODH"/>
</dbReference>
<dbReference type="InterPro" id="IPR016099">
    <property type="entry name" value="Prismane-like_a/b-sand"/>
</dbReference>
<dbReference type="InterPro" id="IPR011254">
    <property type="entry name" value="Prismane-like_sf"/>
</dbReference>
<dbReference type="NCBIfam" id="TIGR01702">
    <property type="entry name" value="CO_DH_cata"/>
    <property type="match status" value="1"/>
</dbReference>
<dbReference type="PANTHER" id="PTHR30109:SF4">
    <property type="entry name" value="CARBON MONOXIDE DEHYDROGENASE"/>
    <property type="match status" value="1"/>
</dbReference>
<dbReference type="PANTHER" id="PTHR30109">
    <property type="entry name" value="HYDROXYLAMINE REDUCTASE"/>
    <property type="match status" value="1"/>
</dbReference>
<dbReference type="Pfam" id="PF03063">
    <property type="entry name" value="Prismane"/>
    <property type="match status" value="1"/>
</dbReference>
<dbReference type="PIRSF" id="PIRSF005023">
    <property type="entry name" value="CODH"/>
    <property type="match status" value="1"/>
</dbReference>
<dbReference type="SUPFAM" id="SSF56821">
    <property type="entry name" value="Prismane protein-like"/>
    <property type="match status" value="1"/>
</dbReference>
<comment type="function">
    <text evidence="1">CODH oxidizes carbon monoxide coupled, via CooF, to the reduction of a hydrogen cation by a hydrogenase (possibly CooH).</text>
</comment>
<comment type="catalytic activity">
    <reaction evidence="1">
        <text>CO + 2 oxidized [2Fe-2S]-[ferredoxin] + H2O = 2 reduced [2Fe-2S]-[ferredoxin] + CO2 + 2 H(+)</text>
        <dbReference type="Rhea" id="RHEA:21040"/>
        <dbReference type="Rhea" id="RHEA-COMP:10000"/>
        <dbReference type="Rhea" id="RHEA-COMP:10001"/>
        <dbReference type="ChEBI" id="CHEBI:15377"/>
        <dbReference type="ChEBI" id="CHEBI:15378"/>
        <dbReference type="ChEBI" id="CHEBI:16526"/>
        <dbReference type="ChEBI" id="CHEBI:17245"/>
        <dbReference type="ChEBI" id="CHEBI:33737"/>
        <dbReference type="ChEBI" id="CHEBI:33738"/>
        <dbReference type="EC" id="1.2.7.4"/>
    </reaction>
</comment>
<comment type="cofactor">
    <cofactor evidence="1">
        <name>[4Fe-4S] cluster</name>
        <dbReference type="ChEBI" id="CHEBI:49883"/>
    </cofactor>
    <text evidence="1">Binds 3 [4Fe-4S] clusters per homodimer.</text>
</comment>
<comment type="cofactor">
    <cofactor evidence="1">
        <name>[Ni-4Fe-5S] cluster</name>
        <dbReference type="ChEBI" id="CHEBI:177874"/>
    </cofactor>
    <text evidence="1">Binds 2 [Ni-4Fe-5S] clusters per homodimer.</text>
</comment>
<comment type="subunit">
    <text evidence="1">Homodimer.</text>
</comment>
<comment type="domain">
    <text evidence="1">Cluster B is an all-cysteinyl-liganded 4Fe-4S cluster; cluster C is a mixed Ni-Fe-S cluster which is the active site of CO oxidation. Cluster D is also an all-cysteinyl-liganded 4Fe-4S cluster that bridges the two subunits of the CODH dimer.</text>
</comment>
<comment type="similarity">
    <text evidence="2">Belongs to the Ni-containing carbon monoxide dehydrogenase family.</text>
</comment>
<comment type="caution">
    <text evidence="2">This protein lacks the conserved Cys in position 54; it is replaced by a Trp. It is therefore possible that the D-cluster is either altered or missing in this protein, which may not form homodimers.</text>
</comment>
<comment type="sequence caution" evidence="2">
    <conflict type="frameshift">
        <sequence resource="EMBL-CDS" id="AAF86272"/>
    </conflict>
</comment>
<gene>
    <name type="primary">cooS</name>
    <name type="ordered locus">MK0536</name>
</gene>
<sequence length="638" mass="69512">MEEKRSSCPYADEAVCELVEHAKELNEEIPEIETPHIRWPVQFPKCPYGKQGVWCNICSNGPCRITEKTPRGVCGATADVIVARNFLRHVAAGAACYVHCLENAARALKSVADEESPYEIADEKALRHAAEVYGLDTSGKPEDVAEEIAEFILEDIYRPRYEESEVFKAVVPDWRIEMYEEMGLIPGGAKSEIHDALVKTSTNLNSDPVDMLLHVLRLGLITGPVALFGVETINDILFGSPKITQTEGGPGILDPDYVNIMTTGHQMALMKYLTDAAEKLEEEAKAAGAKGIRIIGATCVGDDFEARAEHLPDTYAGFAGNNFATEALAATGLVDAIVSEFNCTFPGLKFYKEKLDVELVAVDDVAKVWGAELILWDPERAEEVAEEAVQRAIEAFKERRSKHEDKIMEPKHRHENVVGFGYFSIEEAVGWENVLKLIEEGTIRGVCAIMGCTNLSSGGHNVPAVELAKEMIKRDVLVLGAGCVNGAFANAGLFNPEAAELAGDNLRQVCEELGIPPVLHYGPCLAIGKIEHLVFEIAEILREKTGEEIDIPDVPAVASAPQWLEEQALADASSALALGITLHVSPVPPVTGSELVTKTLLEDLPDLTGGELIVETDMKRAGEILAEKIEEKRKRLGI</sequence>
<keyword id="KW-0004">4Fe-4S</keyword>
<keyword id="KW-0408">Iron</keyword>
<keyword id="KW-0411">Iron-sulfur</keyword>
<keyword id="KW-0479">Metal-binding</keyword>
<keyword id="KW-0533">Nickel</keyword>
<keyword id="KW-0560">Oxidoreductase</keyword>
<keyword id="KW-1185">Reference proteome</keyword>
<feature type="chain" id="PRO_0000157144" description="Carbon monoxide dehydrogenase">
    <location>
        <begin position="1"/>
        <end position="638"/>
    </location>
</feature>
<feature type="binding site" evidence="1">
    <location>
        <position position="46"/>
    </location>
    <ligand>
        <name>[4Fe-4S] cluster</name>
        <dbReference type="ChEBI" id="CHEBI:49883"/>
        <label>1</label>
        <note>ligand shared between dimeric partners</note>
    </ligand>
</feature>
<feature type="binding site" evidence="1">
    <location>
        <position position="55"/>
    </location>
    <ligand>
        <name>[4Fe-4S] cluster</name>
        <dbReference type="ChEBI" id="CHEBI:49883"/>
        <label>2</label>
    </ligand>
</feature>
<feature type="binding site" evidence="1">
    <location>
        <position position="58"/>
    </location>
    <ligand>
        <name>[4Fe-4S] cluster</name>
        <dbReference type="ChEBI" id="CHEBI:49883"/>
        <label>2</label>
    </ligand>
</feature>
<feature type="binding site" evidence="1">
    <location>
        <position position="63"/>
    </location>
    <ligand>
        <name>[4Fe-4S] cluster</name>
        <dbReference type="ChEBI" id="CHEBI:49883"/>
        <label>2</label>
    </ligand>
</feature>
<feature type="binding site" evidence="1">
    <location>
        <position position="74"/>
    </location>
    <ligand>
        <name>[4Fe-4S] cluster</name>
        <dbReference type="ChEBI" id="CHEBI:49883"/>
        <label>2</label>
    </ligand>
</feature>
<feature type="binding site" evidence="1">
    <location>
        <position position="265"/>
    </location>
    <ligand>
        <name>[Ni-4Fe-5S] cluster</name>
        <dbReference type="ChEBI" id="CHEBI:177874"/>
    </ligand>
</feature>
<feature type="binding site" evidence="1">
    <location>
        <position position="299"/>
    </location>
    <ligand>
        <name>[Ni-4Fe-5S] cluster</name>
        <dbReference type="ChEBI" id="CHEBI:177874"/>
    </ligand>
</feature>
<feature type="binding site" evidence="1">
    <location>
        <position position="343"/>
    </location>
    <ligand>
        <name>[Ni-4Fe-5S] cluster</name>
        <dbReference type="ChEBI" id="CHEBI:177874"/>
    </ligand>
</feature>
<feature type="binding site" evidence="1">
    <location>
        <position position="452"/>
    </location>
    <ligand>
        <name>[Ni-4Fe-5S] cluster</name>
        <dbReference type="ChEBI" id="CHEBI:177874"/>
    </ligand>
</feature>
<feature type="binding site" evidence="1">
    <location>
        <position position="483"/>
    </location>
    <ligand>
        <name>[Ni-4Fe-5S] cluster</name>
        <dbReference type="ChEBI" id="CHEBI:177874"/>
    </ligand>
</feature>
<feature type="binding site" evidence="1">
    <location>
        <position position="524"/>
    </location>
    <ligand>
        <name>[Ni-4Fe-5S] cluster</name>
        <dbReference type="ChEBI" id="CHEBI:177874"/>
    </ligand>
</feature>